<proteinExistence type="inferred from homology"/>
<protein>
    <recommendedName>
        <fullName>Movement protein</fullName>
    </recommendedName>
    <alternativeName>
        <fullName>p22</fullName>
    </alternativeName>
</protein>
<keyword id="KW-1043">Host membrane</keyword>
<keyword id="KW-0945">Host-virus interaction</keyword>
<keyword id="KW-0472">Membrane</keyword>
<keyword id="KW-0597">Phosphoprotein</keyword>
<keyword id="KW-0694">RNA-binding</keyword>
<keyword id="KW-0813">Transport</keyword>
<keyword id="KW-0916">Viral movement protein</keyword>
<gene>
    <name type="ORF">ORF3</name>
</gene>
<accession>P50632</accession>
<reference key="1">
    <citation type="journal article" date="1996" name="Phytopathology">
        <title>Different tomato bushy stunt virus strains cause disease outbreaks on solanaceous crops in Spain.</title>
        <authorList>
            <person name="Luis-Areteaga M."/>
            <person name="Rodriguez-Cerezo E."/>
            <person name="Fraile A."/>
            <person name="Saez E."/>
            <person name="Garcia-Arenal F."/>
        </authorList>
        <dbReference type="AGRICOLA" id="IND20581771"/>
    </citation>
    <scope>NUCLEOTIDE SEQUENCE [GENOMIC RNA]</scope>
</reference>
<comment type="function">
    <text evidence="1">Transports viral genome to neighboring plant cells directly through plasmosdesmata, without any budding. The movement protein allows efficient cell to cell propagation, by bypassing the host cell wall barrier (By similarity).</text>
</comment>
<comment type="subunit">
    <text evidence="1">Interacts with host protein HFI22.</text>
</comment>
<comment type="subcellular location">
    <subcellularLocation>
        <location evidence="1">Host membrane</location>
    </subcellularLocation>
</comment>
<comment type="PTM">
    <text evidence="1">Phosphorylated.</text>
</comment>
<comment type="similarity">
    <text evidence="2">Belongs to the tombusvirus/aureusvirus movement protein p22 family.</text>
</comment>
<organismHost>
    <name type="scientific">Capsicum annuum</name>
    <name type="common">Capsicum pepper</name>
    <dbReference type="NCBI Taxonomy" id="4072"/>
</organismHost>
<organismHost>
    <name type="scientific">Malus</name>
    <dbReference type="NCBI Taxonomy" id="3749"/>
</organismHost>
<organismHost>
    <name type="scientific">Pyrus</name>
    <name type="common">pears</name>
    <dbReference type="NCBI Taxonomy" id="3766"/>
</organismHost>
<organismHost>
    <name type="scientific">Solanum lycopersicum</name>
    <name type="common">Tomato</name>
    <name type="synonym">Lycopersicon esculentum</name>
    <dbReference type="NCBI Taxonomy" id="4081"/>
</organismHost>
<organismHost>
    <name type="scientific">Solanum melongena</name>
    <name type="common">eggplant</name>
    <dbReference type="NCBI Taxonomy" id="4111"/>
</organismHost>
<organismHost>
    <name type="scientific">Tolmiea menziesii</name>
    <dbReference type="NCBI Taxonomy" id="29777"/>
</organismHost>
<organismHost>
    <name type="scientific">Tulipa</name>
    <dbReference type="NCBI Taxonomy" id="13305"/>
</organismHost>
<dbReference type="EMBL" id="Z68901">
    <property type="protein sequence ID" value="CAA93135.1"/>
    <property type="molecule type" value="Genomic_RNA"/>
</dbReference>
<dbReference type="GO" id="GO:0033644">
    <property type="term" value="C:host cell membrane"/>
    <property type="evidence" value="ECO:0007669"/>
    <property type="project" value="UniProtKB-SubCell"/>
</dbReference>
<dbReference type="GO" id="GO:0016020">
    <property type="term" value="C:membrane"/>
    <property type="evidence" value="ECO:0007669"/>
    <property type="project" value="UniProtKB-KW"/>
</dbReference>
<dbReference type="GO" id="GO:0019028">
    <property type="term" value="C:viral capsid"/>
    <property type="evidence" value="ECO:0007669"/>
    <property type="project" value="InterPro"/>
</dbReference>
<dbReference type="GO" id="GO:0003723">
    <property type="term" value="F:RNA binding"/>
    <property type="evidence" value="ECO:0007669"/>
    <property type="project" value="UniProtKB-KW"/>
</dbReference>
<dbReference type="GO" id="GO:0046740">
    <property type="term" value="P:transport of virus in host, cell to cell"/>
    <property type="evidence" value="ECO:0007669"/>
    <property type="project" value="UniProtKB-KW"/>
</dbReference>
<dbReference type="InterPro" id="IPR005332">
    <property type="entry name" value="TBSV_p22"/>
</dbReference>
<dbReference type="Pfam" id="PF03558">
    <property type="entry name" value="TBSV_P22"/>
    <property type="match status" value="1"/>
</dbReference>
<evidence type="ECO:0000250" key="1"/>
<evidence type="ECO:0000305" key="2"/>
<feature type="chain" id="PRO_0000222892" description="Movement protein">
    <location>
        <begin position="1"/>
        <end position="189"/>
    </location>
</feature>
<organism>
    <name type="scientific">Tomato bushy stunt virus (strain Ja6)</name>
    <name type="common">TBSV</name>
    <dbReference type="NCBI Taxonomy" id="70157"/>
    <lineage>
        <taxon>Viruses</taxon>
        <taxon>Riboviria</taxon>
        <taxon>Orthornavirae</taxon>
        <taxon>Kitrinoviricota</taxon>
        <taxon>Tolucaviricetes</taxon>
        <taxon>Tolivirales</taxon>
        <taxon>Tombusviridae</taxon>
        <taxon>Procedovirinae</taxon>
        <taxon>Tombusvirus</taxon>
        <taxon>Tombusvirus lycopersici</taxon>
    </lineage>
</organism>
<name>MVP_TBSVJ</name>
<sequence>MDTEYEQVNKPWNELYKETTLGNKLTVNVGMEDQEVPLLPSNFLTKVRVGLSGGYITMRRIRIKIIPLVSRKAGVSGKLYLRDISDTTGRKLHCTESLDLGREIRLTMQHLDFSVSTRSDVPIVFGFEELVSPFLEGRELFSISVRWQFGLSKNCYSLPQSKWKVMYQEDALKVLKPSKKKASKTDSSV</sequence>